<sequence length="190" mass="20806">MLLSDRDLRAEITAGRLGIEPFDDALVQPSSVDVRLDCMFRVFNNTRYTHIDPAKQQDELTSLVEPQDGEPFVLHPGEFVLGSTLELITLPDDLAGRLEGKSSLGRLGLLTHSTAGFIDPGFSGHITLELSNVANLPITLWPGMKIGQLCILRLTSPAEHPYGSTRVGSKYQGQRGPTPSRSYQNFITST</sequence>
<organism>
    <name type="scientific">Mycolicibacterium paratuberculosis (strain ATCC BAA-968 / K-10)</name>
    <name type="common">Mycobacterium paratuberculosis</name>
    <dbReference type="NCBI Taxonomy" id="262316"/>
    <lineage>
        <taxon>Bacteria</taxon>
        <taxon>Bacillati</taxon>
        <taxon>Actinomycetota</taxon>
        <taxon>Actinomycetes</taxon>
        <taxon>Mycobacteriales</taxon>
        <taxon>Mycobacteriaceae</taxon>
        <taxon>Mycobacterium</taxon>
        <taxon>Mycobacterium avium complex (MAC)</taxon>
    </lineage>
</organism>
<evidence type="ECO:0000255" key="1">
    <source>
        <dbReference type="HAMAP-Rule" id="MF_00146"/>
    </source>
</evidence>
<evidence type="ECO:0000256" key="2">
    <source>
        <dbReference type="SAM" id="MobiDB-lite"/>
    </source>
</evidence>
<protein>
    <recommendedName>
        <fullName evidence="1">dCTP deaminase, dUMP-forming</fullName>
        <ecNumber evidence="1">3.5.4.30</ecNumber>
    </recommendedName>
    <alternativeName>
        <fullName evidence="1">Bifunctional dCTP deaminase:dUTPase</fullName>
    </alternativeName>
    <alternativeName>
        <fullName evidence="1">DCD-DUT</fullName>
    </alternativeName>
</protein>
<reference key="1">
    <citation type="journal article" date="2005" name="Proc. Natl. Acad. Sci. U.S.A.">
        <title>The complete genome sequence of Mycobacterium avium subspecies paratuberculosis.</title>
        <authorList>
            <person name="Li L."/>
            <person name="Bannantine J.P."/>
            <person name="Zhang Q."/>
            <person name="Amonsin A."/>
            <person name="May B.J."/>
            <person name="Alt D."/>
            <person name="Banerji N."/>
            <person name="Kanjilal S."/>
            <person name="Kapur V."/>
        </authorList>
    </citation>
    <scope>NUCLEOTIDE SEQUENCE [LARGE SCALE GENOMIC DNA]</scope>
    <source>
        <strain>ATCC BAA-968 / K-10</strain>
    </source>
</reference>
<accession>Q73T98</accession>
<feature type="chain" id="PRO_1000009758" description="dCTP deaminase, dUMP-forming">
    <location>
        <begin position="1"/>
        <end position="190"/>
    </location>
</feature>
<feature type="region of interest" description="Disordered" evidence="2">
    <location>
        <begin position="163"/>
        <end position="190"/>
    </location>
</feature>
<feature type="compositionally biased region" description="Polar residues" evidence="2">
    <location>
        <begin position="171"/>
        <end position="190"/>
    </location>
</feature>
<feature type="active site" description="Proton donor/acceptor" evidence="1">
    <location>
        <position position="129"/>
    </location>
</feature>
<feature type="binding site" evidence="1">
    <location>
        <begin position="101"/>
        <end position="106"/>
    </location>
    <ligand>
        <name>dCTP</name>
        <dbReference type="ChEBI" id="CHEBI:61481"/>
    </ligand>
</feature>
<feature type="binding site" evidence="1">
    <location>
        <position position="119"/>
    </location>
    <ligand>
        <name>dCTP</name>
        <dbReference type="ChEBI" id="CHEBI:61481"/>
    </ligand>
</feature>
<feature type="binding site" evidence="1">
    <location>
        <begin position="127"/>
        <end position="129"/>
    </location>
    <ligand>
        <name>dCTP</name>
        <dbReference type="ChEBI" id="CHEBI:61481"/>
    </ligand>
</feature>
<feature type="binding site" evidence="1">
    <location>
        <position position="148"/>
    </location>
    <ligand>
        <name>dCTP</name>
        <dbReference type="ChEBI" id="CHEBI:61481"/>
    </ligand>
</feature>
<feature type="binding site" evidence="1">
    <location>
        <position position="162"/>
    </location>
    <ligand>
        <name>dCTP</name>
        <dbReference type="ChEBI" id="CHEBI:61481"/>
    </ligand>
</feature>
<feature type="binding site" evidence="1">
    <location>
        <position position="174"/>
    </location>
    <ligand>
        <name>dCTP</name>
        <dbReference type="ChEBI" id="CHEBI:61481"/>
    </ligand>
</feature>
<feature type="site" description="Important for bifunctional activity" evidence="1">
    <location>
        <begin position="116"/>
        <end position="117"/>
    </location>
</feature>
<proteinExistence type="inferred from homology"/>
<comment type="function">
    <text evidence="1">Bifunctional enzyme that catalyzes both the deamination of dCTP to dUTP and the hydrolysis of dUTP to dUMP without releasing the toxic dUTP intermediate.</text>
</comment>
<comment type="catalytic activity">
    <reaction evidence="1">
        <text>dCTP + 2 H2O = dUMP + NH4(+) + diphosphate</text>
        <dbReference type="Rhea" id="RHEA:19205"/>
        <dbReference type="ChEBI" id="CHEBI:15377"/>
        <dbReference type="ChEBI" id="CHEBI:28938"/>
        <dbReference type="ChEBI" id="CHEBI:33019"/>
        <dbReference type="ChEBI" id="CHEBI:61481"/>
        <dbReference type="ChEBI" id="CHEBI:246422"/>
        <dbReference type="EC" id="3.5.4.30"/>
    </reaction>
</comment>
<comment type="pathway">
    <text evidence="1">Pyrimidine metabolism; dUMP biosynthesis; dUMP from dCTP: step 1/1.</text>
</comment>
<comment type="subunit">
    <text evidence="1">Homotrimer.</text>
</comment>
<comment type="similarity">
    <text evidence="1">Belongs to the dCTP deaminase family.</text>
</comment>
<dbReference type="EC" id="3.5.4.30" evidence="1"/>
<dbReference type="EMBL" id="AE016958">
    <property type="protein sequence ID" value="AAS06370.1"/>
    <property type="molecule type" value="Genomic_DNA"/>
</dbReference>
<dbReference type="RefSeq" id="WP_003879212.1">
    <property type="nucleotide sequence ID" value="NZ_CP106873.1"/>
</dbReference>
<dbReference type="SMR" id="Q73T98"/>
<dbReference type="STRING" id="262316.MAP_3820"/>
<dbReference type="KEGG" id="mpa:MAP_3820"/>
<dbReference type="PATRIC" id="fig|262316.17.peg.4067"/>
<dbReference type="eggNOG" id="COG0717">
    <property type="taxonomic scope" value="Bacteria"/>
</dbReference>
<dbReference type="HOGENOM" id="CLU_087476_2_1_11"/>
<dbReference type="UniPathway" id="UPA00610">
    <property type="reaction ID" value="UER00667"/>
</dbReference>
<dbReference type="Proteomes" id="UP000000580">
    <property type="component" value="Chromosome"/>
</dbReference>
<dbReference type="GO" id="GO:0033973">
    <property type="term" value="F:dCTP deaminase (dUMP-forming) activity"/>
    <property type="evidence" value="ECO:0007669"/>
    <property type="project" value="UniProtKB-UniRule"/>
</dbReference>
<dbReference type="GO" id="GO:0008829">
    <property type="term" value="F:dCTP deaminase activity"/>
    <property type="evidence" value="ECO:0007669"/>
    <property type="project" value="InterPro"/>
</dbReference>
<dbReference type="GO" id="GO:0000166">
    <property type="term" value="F:nucleotide binding"/>
    <property type="evidence" value="ECO:0007669"/>
    <property type="project" value="UniProtKB-KW"/>
</dbReference>
<dbReference type="GO" id="GO:0006226">
    <property type="term" value="P:dUMP biosynthetic process"/>
    <property type="evidence" value="ECO:0007669"/>
    <property type="project" value="UniProtKB-UniRule"/>
</dbReference>
<dbReference type="GO" id="GO:0006229">
    <property type="term" value="P:dUTP biosynthetic process"/>
    <property type="evidence" value="ECO:0007669"/>
    <property type="project" value="InterPro"/>
</dbReference>
<dbReference type="GO" id="GO:0015949">
    <property type="term" value="P:nucleobase-containing small molecule interconversion"/>
    <property type="evidence" value="ECO:0007669"/>
    <property type="project" value="TreeGrafter"/>
</dbReference>
<dbReference type="CDD" id="cd07557">
    <property type="entry name" value="trimeric_dUTPase"/>
    <property type="match status" value="1"/>
</dbReference>
<dbReference type="FunFam" id="2.70.40.10:FF:000005">
    <property type="entry name" value="dCTP deaminase, dUMP-forming"/>
    <property type="match status" value="1"/>
</dbReference>
<dbReference type="Gene3D" id="2.70.40.10">
    <property type="match status" value="1"/>
</dbReference>
<dbReference type="HAMAP" id="MF_00146">
    <property type="entry name" value="dCTP_deaminase"/>
    <property type="match status" value="1"/>
</dbReference>
<dbReference type="InterPro" id="IPR011962">
    <property type="entry name" value="dCTP_deaminase"/>
</dbReference>
<dbReference type="InterPro" id="IPR036157">
    <property type="entry name" value="dUTPase-like_sf"/>
</dbReference>
<dbReference type="InterPro" id="IPR033704">
    <property type="entry name" value="dUTPase_trimeric"/>
</dbReference>
<dbReference type="NCBIfam" id="TIGR02274">
    <property type="entry name" value="dCTP_deam"/>
    <property type="match status" value="1"/>
</dbReference>
<dbReference type="PANTHER" id="PTHR42680">
    <property type="entry name" value="DCTP DEAMINASE"/>
    <property type="match status" value="1"/>
</dbReference>
<dbReference type="PANTHER" id="PTHR42680:SF3">
    <property type="entry name" value="DCTP DEAMINASE"/>
    <property type="match status" value="1"/>
</dbReference>
<dbReference type="Pfam" id="PF22769">
    <property type="entry name" value="DCD"/>
    <property type="match status" value="1"/>
</dbReference>
<dbReference type="SUPFAM" id="SSF51283">
    <property type="entry name" value="dUTPase-like"/>
    <property type="match status" value="1"/>
</dbReference>
<gene>
    <name evidence="1" type="primary">dcd</name>
    <name type="ordered locus">MAP_3820</name>
</gene>
<keyword id="KW-0378">Hydrolase</keyword>
<keyword id="KW-0546">Nucleotide metabolism</keyword>
<keyword id="KW-0547">Nucleotide-binding</keyword>
<keyword id="KW-1185">Reference proteome</keyword>
<name>DCDB_MYCPA</name>